<feature type="signal peptide" evidence="3">
    <location>
        <begin position="1"/>
        <end position="21"/>
    </location>
</feature>
<feature type="propeptide" id="PRO_0000400574" evidence="2">
    <location>
        <begin position="22"/>
        <end position="49"/>
    </location>
</feature>
<feature type="peptide" id="PRO_0000400575" description="Mu-theraphotoxin-Hhn1d">
    <location>
        <begin position="50"/>
        <end position="84"/>
    </location>
</feature>
<feature type="modified residue" description="Isoleucine amide" evidence="1">
    <location>
        <position position="84"/>
    </location>
</feature>
<feature type="disulfide bond" evidence="2">
    <location>
        <begin position="51"/>
        <end position="66"/>
    </location>
</feature>
<feature type="disulfide bond" evidence="2">
    <location>
        <begin position="58"/>
        <end position="73"/>
    </location>
</feature>
<feature type="disulfide bond" evidence="2">
    <location>
        <begin position="65"/>
        <end position="80"/>
    </location>
</feature>
<keyword id="KW-0027">Amidation</keyword>
<keyword id="KW-1015">Disulfide bond</keyword>
<keyword id="KW-0872">Ion channel impairing toxin</keyword>
<keyword id="KW-0960">Knottin</keyword>
<keyword id="KW-0528">Neurotoxin</keyword>
<keyword id="KW-0638">Presynaptic neurotoxin</keyword>
<keyword id="KW-0964">Secreted</keyword>
<keyword id="KW-0732">Signal</keyword>
<keyword id="KW-0800">Toxin</keyword>
<keyword id="KW-0738">Voltage-gated sodium channel impairing toxin</keyword>
<proteinExistence type="evidence at transcript level"/>
<evidence type="ECO:0000250" key="1"/>
<evidence type="ECO:0000250" key="2">
    <source>
        <dbReference type="UniProtKB" id="D2Y232"/>
    </source>
</evidence>
<evidence type="ECO:0000255" key="3"/>
<evidence type="ECO:0000305" key="4"/>
<comment type="function">
    <text evidence="2">Neurotoxin. Selectively blocks neuronal tetrodotoxin-sensitive voltage-gated sodium channels (Nav). Does not affect tetrodotoxin-resistant voltage-gated sodium channels or calcium channels.</text>
</comment>
<comment type="subunit">
    <text evidence="1">Monomer.</text>
</comment>
<comment type="subcellular location">
    <subcellularLocation>
        <location evidence="1">Secreted</location>
    </subcellularLocation>
</comment>
<comment type="tissue specificity">
    <text>Expressed by the venom gland.</text>
</comment>
<comment type="domain">
    <text evidence="1">The presence of a 'disulfide through disulfide knot' structurally defines this protein as a knottin.</text>
</comment>
<comment type="similarity">
    <text evidence="4">Belongs to the neurotoxin 10 (Hwtx-1) family. 22 (Htx-4) subfamily.</text>
</comment>
<organism>
    <name type="scientific">Cyriopagopus hainanus</name>
    <name type="common">Chinese bird spider</name>
    <name type="synonym">Haplopelma hainanum</name>
    <dbReference type="NCBI Taxonomy" id="209901"/>
    <lineage>
        <taxon>Eukaryota</taxon>
        <taxon>Metazoa</taxon>
        <taxon>Ecdysozoa</taxon>
        <taxon>Arthropoda</taxon>
        <taxon>Chelicerata</taxon>
        <taxon>Arachnida</taxon>
        <taxon>Araneae</taxon>
        <taxon>Mygalomorphae</taxon>
        <taxon>Theraphosidae</taxon>
        <taxon>Haplopelma</taxon>
    </lineage>
</organism>
<protein>
    <recommendedName>
        <fullName>Mu-theraphotoxin-Hhn1d</fullName>
        <shortName>Mu-TRTX-Hhn1d</shortName>
    </recommendedName>
    <alternativeName>
        <fullName>Hainantoxin-IV-3</fullName>
        <shortName>HNTX-IV-3</shortName>
    </alternativeName>
</protein>
<name>H4C01_CYRHA</name>
<sequence length="86" mass="9478">MKASMFLALAGLALLFVVCYASESEEKEFSNELLSSVLAVDDNSKGEERECLGFGKGCNPSSDQCCKSSNLVCSRKHRWCKYEIGK</sequence>
<reference key="1">
    <citation type="journal article" date="2010" name="J. Proteome Res.">
        <title>Molecular diversification of peptide toxins from the tarantula Haplopelma hainanum (Ornithoctonus hainana) venom based on transcriptomic, peptidomic, and genomic analyses.</title>
        <authorList>
            <person name="Tang X."/>
            <person name="Zhang Y."/>
            <person name="Hu W."/>
            <person name="Xu D."/>
            <person name="Tao H."/>
            <person name="Yang X."/>
            <person name="Li Y."/>
            <person name="Jiang L."/>
            <person name="Liang S."/>
        </authorList>
    </citation>
    <scope>NUCLEOTIDE SEQUENCE [LARGE SCALE MRNA]</scope>
    <source>
        <tissue>Venom gland</tissue>
    </source>
</reference>
<accession>D2Y235</accession>
<dbReference type="EMBL" id="GU292912">
    <property type="protein sequence ID" value="ADB56728.1"/>
    <property type="molecule type" value="mRNA"/>
</dbReference>
<dbReference type="BMRB" id="D2Y235"/>
<dbReference type="SMR" id="D2Y235"/>
<dbReference type="ArachnoServer" id="AS001927">
    <property type="toxin name" value="mu-theraphotoxin-Hhn1d"/>
</dbReference>
<dbReference type="GO" id="GO:0005576">
    <property type="term" value="C:extracellular region"/>
    <property type="evidence" value="ECO:0007669"/>
    <property type="project" value="UniProtKB-SubCell"/>
</dbReference>
<dbReference type="GO" id="GO:0044231">
    <property type="term" value="C:host cell presynaptic membrane"/>
    <property type="evidence" value="ECO:0007669"/>
    <property type="project" value="UniProtKB-KW"/>
</dbReference>
<dbReference type="GO" id="GO:0008200">
    <property type="term" value="F:ion channel inhibitor activity"/>
    <property type="evidence" value="ECO:0007669"/>
    <property type="project" value="InterPro"/>
</dbReference>
<dbReference type="GO" id="GO:0017080">
    <property type="term" value="F:sodium channel regulator activity"/>
    <property type="evidence" value="ECO:0007669"/>
    <property type="project" value="UniProtKB-KW"/>
</dbReference>
<dbReference type="GO" id="GO:0090729">
    <property type="term" value="F:toxin activity"/>
    <property type="evidence" value="ECO:0007669"/>
    <property type="project" value="UniProtKB-KW"/>
</dbReference>
<dbReference type="InterPro" id="IPR011696">
    <property type="entry name" value="Huwentoxin-1"/>
</dbReference>
<dbReference type="InterPro" id="IPR013140">
    <property type="entry name" value="Huwentoxin_CS1"/>
</dbReference>
<dbReference type="Pfam" id="PF07740">
    <property type="entry name" value="Toxin_12"/>
    <property type="match status" value="1"/>
</dbReference>
<dbReference type="SUPFAM" id="SSF57059">
    <property type="entry name" value="omega toxin-like"/>
    <property type="match status" value="1"/>
</dbReference>
<dbReference type="PROSITE" id="PS60021">
    <property type="entry name" value="HWTX_1"/>
    <property type="match status" value="1"/>
</dbReference>